<comment type="function">
    <text evidence="1">Catalyzes the reversible phosphorylation of UMP to UDP.</text>
</comment>
<comment type="catalytic activity">
    <reaction evidence="1">
        <text>UMP + ATP = UDP + ADP</text>
        <dbReference type="Rhea" id="RHEA:24400"/>
        <dbReference type="ChEBI" id="CHEBI:30616"/>
        <dbReference type="ChEBI" id="CHEBI:57865"/>
        <dbReference type="ChEBI" id="CHEBI:58223"/>
        <dbReference type="ChEBI" id="CHEBI:456216"/>
        <dbReference type="EC" id="2.7.4.22"/>
    </reaction>
</comment>
<comment type="activity regulation">
    <text evidence="1">Allosterically activated by GTP. Inhibited by UTP.</text>
</comment>
<comment type="pathway">
    <text evidence="1">Pyrimidine metabolism; CTP biosynthesis via de novo pathway; UDP from UMP (UMPK route): step 1/1.</text>
</comment>
<comment type="subunit">
    <text evidence="1">Homohexamer.</text>
</comment>
<comment type="subcellular location">
    <subcellularLocation>
        <location evidence="1">Cytoplasm</location>
    </subcellularLocation>
</comment>
<comment type="similarity">
    <text evidence="1">Belongs to the UMP kinase family.</text>
</comment>
<sequence>MAQISKYKRVVLKLSGEALAGEKGFGINPVIIKSVAEQVAEVAKMDCEIAVIVGGGNIWRGKTGSDLGMDRGTADYMGMLATVMNALALQDSLEQLDCDTRVLTSIEMKQVAEPYIRRRAIRHLEKKRVVIFAAGIGNPYFSTDTTAALRAAEVEADVILMGKNNVDGVYSADPKVNKDAVKYEHLTHIQMLQEGLQVMDSTASSFCMDNNIPLTVFSIMEEGNIKRAVMGEKIGTLITK</sequence>
<organism>
    <name type="scientific">Staphylococcus aureus (strain USA300)</name>
    <dbReference type="NCBI Taxonomy" id="367830"/>
    <lineage>
        <taxon>Bacteria</taxon>
        <taxon>Bacillati</taxon>
        <taxon>Bacillota</taxon>
        <taxon>Bacilli</taxon>
        <taxon>Bacillales</taxon>
        <taxon>Staphylococcaceae</taxon>
        <taxon>Staphylococcus</taxon>
    </lineage>
</organism>
<evidence type="ECO:0000255" key="1">
    <source>
        <dbReference type="HAMAP-Rule" id="MF_01220"/>
    </source>
</evidence>
<protein>
    <recommendedName>
        <fullName evidence="1">Uridylate kinase</fullName>
        <shortName evidence="1">UK</shortName>
        <ecNumber evidence="1">2.7.4.22</ecNumber>
    </recommendedName>
    <alternativeName>
        <fullName evidence="1">Uridine monophosphate kinase</fullName>
        <shortName evidence="1">UMP kinase</shortName>
        <shortName evidence="1">UMPK</shortName>
    </alternativeName>
</protein>
<gene>
    <name evidence="1" type="primary">pyrH</name>
    <name type="ordered locus">SAUSA300_1151</name>
</gene>
<name>PYRH_STAA3</name>
<feature type="chain" id="PRO_1000054024" description="Uridylate kinase">
    <location>
        <begin position="1"/>
        <end position="240"/>
    </location>
</feature>
<feature type="region of interest" description="Involved in allosteric activation by GTP" evidence="1">
    <location>
        <begin position="21"/>
        <end position="26"/>
    </location>
</feature>
<feature type="binding site" evidence="1">
    <location>
        <begin position="13"/>
        <end position="16"/>
    </location>
    <ligand>
        <name>ATP</name>
        <dbReference type="ChEBI" id="CHEBI:30616"/>
    </ligand>
</feature>
<feature type="binding site" evidence="1">
    <location>
        <position position="55"/>
    </location>
    <ligand>
        <name>UMP</name>
        <dbReference type="ChEBI" id="CHEBI:57865"/>
    </ligand>
</feature>
<feature type="binding site" evidence="1">
    <location>
        <position position="56"/>
    </location>
    <ligand>
        <name>ATP</name>
        <dbReference type="ChEBI" id="CHEBI:30616"/>
    </ligand>
</feature>
<feature type="binding site" evidence="1">
    <location>
        <position position="60"/>
    </location>
    <ligand>
        <name>ATP</name>
        <dbReference type="ChEBI" id="CHEBI:30616"/>
    </ligand>
</feature>
<feature type="binding site" evidence="1">
    <location>
        <position position="75"/>
    </location>
    <ligand>
        <name>UMP</name>
        <dbReference type="ChEBI" id="CHEBI:57865"/>
    </ligand>
</feature>
<feature type="binding site" evidence="1">
    <location>
        <begin position="136"/>
        <end position="143"/>
    </location>
    <ligand>
        <name>UMP</name>
        <dbReference type="ChEBI" id="CHEBI:57865"/>
    </ligand>
</feature>
<feature type="binding site" evidence="1">
    <location>
        <position position="164"/>
    </location>
    <ligand>
        <name>ATP</name>
        <dbReference type="ChEBI" id="CHEBI:30616"/>
    </ligand>
</feature>
<feature type="binding site" evidence="1">
    <location>
        <position position="170"/>
    </location>
    <ligand>
        <name>ATP</name>
        <dbReference type="ChEBI" id="CHEBI:30616"/>
    </ligand>
</feature>
<feature type="binding site" evidence="1">
    <location>
        <position position="173"/>
    </location>
    <ligand>
        <name>ATP</name>
        <dbReference type="ChEBI" id="CHEBI:30616"/>
    </ligand>
</feature>
<dbReference type="EC" id="2.7.4.22" evidence="1"/>
<dbReference type="EMBL" id="CP000255">
    <property type="protein sequence ID" value="ABD22670.1"/>
    <property type="molecule type" value="Genomic_DNA"/>
</dbReference>
<dbReference type="RefSeq" id="WP_000057330.1">
    <property type="nucleotide sequence ID" value="NZ_CP027476.1"/>
</dbReference>
<dbReference type="SMR" id="Q2FHI0"/>
<dbReference type="GeneID" id="98345574"/>
<dbReference type="KEGG" id="saa:SAUSA300_1151"/>
<dbReference type="HOGENOM" id="CLU_033861_0_0_9"/>
<dbReference type="OMA" id="LMGDKQF"/>
<dbReference type="UniPathway" id="UPA00159">
    <property type="reaction ID" value="UER00275"/>
</dbReference>
<dbReference type="Proteomes" id="UP000001939">
    <property type="component" value="Chromosome"/>
</dbReference>
<dbReference type="GO" id="GO:0005737">
    <property type="term" value="C:cytoplasm"/>
    <property type="evidence" value="ECO:0007669"/>
    <property type="project" value="UniProtKB-SubCell"/>
</dbReference>
<dbReference type="GO" id="GO:0005524">
    <property type="term" value="F:ATP binding"/>
    <property type="evidence" value="ECO:0007669"/>
    <property type="project" value="UniProtKB-KW"/>
</dbReference>
<dbReference type="GO" id="GO:0033862">
    <property type="term" value="F:UMP kinase activity"/>
    <property type="evidence" value="ECO:0007669"/>
    <property type="project" value="UniProtKB-EC"/>
</dbReference>
<dbReference type="GO" id="GO:0044210">
    <property type="term" value="P:'de novo' CTP biosynthetic process"/>
    <property type="evidence" value="ECO:0007669"/>
    <property type="project" value="UniProtKB-UniRule"/>
</dbReference>
<dbReference type="GO" id="GO:0006225">
    <property type="term" value="P:UDP biosynthetic process"/>
    <property type="evidence" value="ECO:0007669"/>
    <property type="project" value="TreeGrafter"/>
</dbReference>
<dbReference type="CDD" id="cd04254">
    <property type="entry name" value="AAK_UMPK-PyrH-Ec"/>
    <property type="match status" value="1"/>
</dbReference>
<dbReference type="FunFam" id="3.40.1160.10:FF:000001">
    <property type="entry name" value="Uridylate kinase"/>
    <property type="match status" value="1"/>
</dbReference>
<dbReference type="Gene3D" id="3.40.1160.10">
    <property type="entry name" value="Acetylglutamate kinase-like"/>
    <property type="match status" value="1"/>
</dbReference>
<dbReference type="HAMAP" id="MF_01220_B">
    <property type="entry name" value="PyrH_B"/>
    <property type="match status" value="1"/>
</dbReference>
<dbReference type="InterPro" id="IPR036393">
    <property type="entry name" value="AceGlu_kinase-like_sf"/>
</dbReference>
<dbReference type="InterPro" id="IPR001048">
    <property type="entry name" value="Asp/Glu/Uridylate_kinase"/>
</dbReference>
<dbReference type="InterPro" id="IPR011817">
    <property type="entry name" value="Uridylate_kinase"/>
</dbReference>
<dbReference type="InterPro" id="IPR015963">
    <property type="entry name" value="Uridylate_kinase_bac"/>
</dbReference>
<dbReference type="NCBIfam" id="TIGR02075">
    <property type="entry name" value="pyrH_bact"/>
    <property type="match status" value="1"/>
</dbReference>
<dbReference type="PANTHER" id="PTHR42833">
    <property type="entry name" value="URIDYLATE KINASE"/>
    <property type="match status" value="1"/>
</dbReference>
<dbReference type="PANTHER" id="PTHR42833:SF4">
    <property type="entry name" value="URIDYLATE KINASE PUMPKIN, CHLOROPLASTIC"/>
    <property type="match status" value="1"/>
</dbReference>
<dbReference type="Pfam" id="PF00696">
    <property type="entry name" value="AA_kinase"/>
    <property type="match status" value="1"/>
</dbReference>
<dbReference type="PIRSF" id="PIRSF005650">
    <property type="entry name" value="Uridylate_kin"/>
    <property type="match status" value="1"/>
</dbReference>
<dbReference type="SUPFAM" id="SSF53633">
    <property type="entry name" value="Carbamate kinase-like"/>
    <property type="match status" value="1"/>
</dbReference>
<proteinExistence type="inferred from homology"/>
<keyword id="KW-0021">Allosteric enzyme</keyword>
<keyword id="KW-0067">ATP-binding</keyword>
<keyword id="KW-0963">Cytoplasm</keyword>
<keyword id="KW-0418">Kinase</keyword>
<keyword id="KW-0547">Nucleotide-binding</keyword>
<keyword id="KW-0665">Pyrimidine biosynthesis</keyword>
<keyword id="KW-0808">Transferase</keyword>
<accession>Q2FHI0</accession>
<reference key="1">
    <citation type="journal article" date="2006" name="Lancet">
        <title>Complete genome sequence of USA300, an epidemic clone of community-acquired meticillin-resistant Staphylococcus aureus.</title>
        <authorList>
            <person name="Diep B.A."/>
            <person name="Gill S.R."/>
            <person name="Chang R.F."/>
            <person name="Phan T.H."/>
            <person name="Chen J.H."/>
            <person name="Davidson M.G."/>
            <person name="Lin F."/>
            <person name="Lin J."/>
            <person name="Carleton H.A."/>
            <person name="Mongodin E.F."/>
            <person name="Sensabaugh G.F."/>
            <person name="Perdreau-Remington F."/>
        </authorList>
    </citation>
    <scope>NUCLEOTIDE SEQUENCE [LARGE SCALE GENOMIC DNA]</scope>
    <source>
        <strain>USA300</strain>
    </source>
</reference>